<proteinExistence type="evidence at protein level"/>
<name>TSSP_HUMAN</name>
<evidence type="ECO:0000255" key="1"/>
<evidence type="ECO:0000305" key="2"/>
<feature type="signal peptide" evidence="1">
    <location>
        <begin position="1"/>
        <end position="24"/>
    </location>
</feature>
<feature type="chain" id="PRO_0000027320" description="Thymus-specific serine protease">
    <location>
        <begin position="25"/>
        <end position="514"/>
    </location>
</feature>
<feature type="active site" description="Charge relay system" evidence="1">
    <location>
        <position position="185"/>
    </location>
</feature>
<feature type="active site" description="Charge relay system" evidence="1">
    <location>
        <position position="447"/>
    </location>
</feature>
<feature type="active site" description="Charge relay system" evidence="1">
    <location>
        <position position="472"/>
    </location>
</feature>
<feature type="glycosylation site" description="N-linked (GlcNAc...) asparagine" evidence="1">
    <location>
        <position position="70"/>
    </location>
</feature>
<feature type="glycosylation site" description="N-linked (GlcNAc...) asparagine" evidence="1">
    <location>
        <position position="172"/>
    </location>
</feature>
<feature type="glycosylation site" description="N-linked (GlcNAc...) asparagine" evidence="1">
    <location>
        <position position="321"/>
    </location>
</feature>
<feature type="sequence variant" id="VAR_051826" description="In dbSNP:rs5030965.">
    <original>S</original>
    <variation>I</variation>
    <location>
        <position position="104"/>
    </location>
</feature>
<feature type="sequence variant" id="VAR_051827" description="In dbSNP:rs35466700.">
    <original>A</original>
    <variation>G</variation>
    <location>
        <position position="204"/>
    </location>
</feature>
<keyword id="KW-0968">Cytoplasmic vesicle</keyword>
<keyword id="KW-0325">Glycoprotein</keyword>
<keyword id="KW-0378">Hydrolase</keyword>
<keyword id="KW-0645">Protease</keyword>
<keyword id="KW-1267">Proteomics identification</keyword>
<keyword id="KW-1185">Reference proteome</keyword>
<keyword id="KW-0720">Serine protease</keyword>
<keyword id="KW-0732">Signal</keyword>
<dbReference type="EC" id="3.4.-.-"/>
<dbReference type="EMBL" id="AF052514">
    <property type="protein sequence ID" value="AAC33563.1"/>
    <property type="molecule type" value="mRNA"/>
</dbReference>
<dbReference type="EMBL" id="AL021808">
    <property type="status" value="NOT_ANNOTATED_CDS"/>
    <property type="molecule type" value="Genomic_DNA"/>
</dbReference>
<dbReference type="CCDS" id="CCDS4623.1"/>
<dbReference type="RefSeq" id="NP_005856.1">
    <property type="nucleotide sequence ID" value="NM_005865.4"/>
</dbReference>
<dbReference type="SMR" id="Q9NQE7"/>
<dbReference type="BioGRID" id="115568">
    <property type="interactions" value="133"/>
</dbReference>
<dbReference type="FunCoup" id="Q9NQE7">
    <property type="interactions" value="881"/>
</dbReference>
<dbReference type="IntAct" id="Q9NQE7">
    <property type="interactions" value="40"/>
</dbReference>
<dbReference type="MINT" id="Q9NQE7"/>
<dbReference type="STRING" id="9606.ENSP00000230582"/>
<dbReference type="ESTHER" id="human-PRSS16">
    <property type="family name" value="Prolylcarboxypeptidase"/>
</dbReference>
<dbReference type="MEROPS" id="S28.003"/>
<dbReference type="GlyCosmos" id="Q9NQE7">
    <property type="glycosylation" value="3 sites, No reported glycans"/>
</dbReference>
<dbReference type="GlyGen" id="Q9NQE7">
    <property type="glycosylation" value="3 sites"/>
</dbReference>
<dbReference type="iPTMnet" id="Q9NQE7"/>
<dbReference type="PhosphoSitePlus" id="Q9NQE7"/>
<dbReference type="BioMuta" id="PRSS16"/>
<dbReference type="DMDM" id="13633990"/>
<dbReference type="MassIVE" id="Q9NQE7"/>
<dbReference type="PaxDb" id="9606-ENSP00000230582"/>
<dbReference type="PeptideAtlas" id="Q9NQE7"/>
<dbReference type="Antibodypedia" id="1724">
    <property type="antibodies" value="100 antibodies from 21 providers"/>
</dbReference>
<dbReference type="DNASU" id="10279"/>
<dbReference type="Ensembl" id="ENST00000230582.8">
    <property type="protein sequence ID" value="ENSP00000230582.3"/>
    <property type="gene ID" value="ENSG00000112812.16"/>
</dbReference>
<dbReference type="GeneID" id="10279"/>
<dbReference type="KEGG" id="hsa:10279"/>
<dbReference type="MANE-Select" id="ENST00000230582.8">
    <property type="protein sequence ID" value="ENSP00000230582.3"/>
    <property type="RefSeq nucleotide sequence ID" value="NM_005865.4"/>
    <property type="RefSeq protein sequence ID" value="NP_005856.1"/>
</dbReference>
<dbReference type="UCSC" id="uc003nja.4">
    <property type="organism name" value="human"/>
</dbReference>
<dbReference type="AGR" id="HGNC:9480"/>
<dbReference type="CTD" id="10279"/>
<dbReference type="DisGeNET" id="10279"/>
<dbReference type="GeneCards" id="PRSS16"/>
<dbReference type="HGNC" id="HGNC:9480">
    <property type="gene designation" value="PRSS16"/>
</dbReference>
<dbReference type="HPA" id="ENSG00000112812">
    <property type="expression patterns" value="Tissue enriched (lymphoid)"/>
</dbReference>
<dbReference type="MIM" id="607169">
    <property type="type" value="gene"/>
</dbReference>
<dbReference type="neXtProt" id="NX_Q9NQE7"/>
<dbReference type="OpenTargets" id="ENSG00000112812"/>
<dbReference type="PharmGKB" id="PA33832"/>
<dbReference type="VEuPathDB" id="HostDB:ENSG00000112812"/>
<dbReference type="eggNOG" id="KOG2182">
    <property type="taxonomic scope" value="Eukaryota"/>
</dbReference>
<dbReference type="GeneTree" id="ENSGT00940000160281"/>
<dbReference type="HOGENOM" id="CLU_020959_3_1_1"/>
<dbReference type="InParanoid" id="Q9NQE7"/>
<dbReference type="OMA" id="WQYCSEW"/>
<dbReference type="OrthoDB" id="1735038at2759"/>
<dbReference type="PAN-GO" id="Q9NQE7">
    <property type="GO annotations" value="3 GO annotations based on evolutionary models"/>
</dbReference>
<dbReference type="PhylomeDB" id="Q9NQE7"/>
<dbReference type="TreeFam" id="TF314855"/>
<dbReference type="PathwayCommons" id="Q9NQE7"/>
<dbReference type="SignaLink" id="Q9NQE7"/>
<dbReference type="BioGRID-ORCS" id="10279">
    <property type="hits" value="10 hits in 1152 CRISPR screens"/>
</dbReference>
<dbReference type="ChiTaRS" id="PRSS16">
    <property type="organism name" value="human"/>
</dbReference>
<dbReference type="GeneWiki" id="PRSS16"/>
<dbReference type="GenomeRNAi" id="10279"/>
<dbReference type="Pharos" id="Q9NQE7">
    <property type="development level" value="Tbio"/>
</dbReference>
<dbReference type="PRO" id="PR:Q9NQE7"/>
<dbReference type="Proteomes" id="UP000005640">
    <property type="component" value="Chromosome 6"/>
</dbReference>
<dbReference type="RNAct" id="Q9NQE7">
    <property type="molecule type" value="protein"/>
</dbReference>
<dbReference type="Bgee" id="ENSG00000112812">
    <property type="expression patterns" value="Expressed in thymus and 114 other cell types or tissues"/>
</dbReference>
<dbReference type="ExpressionAtlas" id="Q9NQE7">
    <property type="expression patterns" value="baseline and differential"/>
</dbReference>
<dbReference type="GO" id="GO:0005768">
    <property type="term" value="C:endosome"/>
    <property type="evidence" value="ECO:0000314"/>
    <property type="project" value="UniProtKB"/>
</dbReference>
<dbReference type="GO" id="GO:0005764">
    <property type="term" value="C:lysosome"/>
    <property type="evidence" value="ECO:0000314"/>
    <property type="project" value="UniProtKB"/>
</dbReference>
<dbReference type="GO" id="GO:0008239">
    <property type="term" value="F:dipeptidyl-peptidase activity"/>
    <property type="evidence" value="ECO:0000318"/>
    <property type="project" value="GO_Central"/>
</dbReference>
<dbReference type="GO" id="GO:0070008">
    <property type="term" value="F:serine-type exopeptidase activity"/>
    <property type="evidence" value="ECO:0007669"/>
    <property type="project" value="InterPro"/>
</dbReference>
<dbReference type="GO" id="GO:0008236">
    <property type="term" value="F:serine-type peptidase activity"/>
    <property type="evidence" value="ECO:0000303"/>
    <property type="project" value="UniProtKB"/>
</dbReference>
<dbReference type="GO" id="GO:0030163">
    <property type="term" value="P:protein catabolic process"/>
    <property type="evidence" value="ECO:0000303"/>
    <property type="project" value="UniProtKB"/>
</dbReference>
<dbReference type="GO" id="GO:0006508">
    <property type="term" value="P:proteolysis"/>
    <property type="evidence" value="ECO:0007669"/>
    <property type="project" value="UniProtKB-KW"/>
</dbReference>
<dbReference type="FunFam" id="3.40.50.1820:FF:000200">
    <property type="entry name" value="Serine protease 16"/>
    <property type="match status" value="1"/>
</dbReference>
<dbReference type="FunFam" id="1.20.120.980:FF:000004">
    <property type="entry name" value="Thymus-specific serine protease"/>
    <property type="match status" value="1"/>
</dbReference>
<dbReference type="Gene3D" id="3.40.50.1820">
    <property type="entry name" value="alpha/beta hydrolase"/>
    <property type="match status" value="1"/>
</dbReference>
<dbReference type="Gene3D" id="1.20.120.980">
    <property type="entry name" value="Serine carboxypeptidase S28, SKS domain"/>
    <property type="match status" value="1"/>
</dbReference>
<dbReference type="InterPro" id="IPR029058">
    <property type="entry name" value="AB_hydrolase_fold"/>
</dbReference>
<dbReference type="InterPro" id="IPR008758">
    <property type="entry name" value="Peptidase_S28"/>
</dbReference>
<dbReference type="InterPro" id="IPR042269">
    <property type="entry name" value="Ser_carbopepase_S28_SKS"/>
</dbReference>
<dbReference type="PANTHER" id="PTHR11010">
    <property type="entry name" value="PROTEASE S28 PRO-X CARBOXYPEPTIDASE-RELATED"/>
    <property type="match status" value="1"/>
</dbReference>
<dbReference type="PANTHER" id="PTHR11010:SF11">
    <property type="entry name" value="THYMUS-SPECIFIC SERINE PROTEASE"/>
    <property type="match status" value="1"/>
</dbReference>
<dbReference type="Pfam" id="PF05577">
    <property type="entry name" value="Peptidase_S28"/>
    <property type="match status" value="1"/>
</dbReference>
<dbReference type="SUPFAM" id="SSF53474">
    <property type="entry name" value="alpha/beta-Hydrolases"/>
    <property type="match status" value="1"/>
</dbReference>
<accession>Q9NQE7</accession>
<accession>O75416</accession>
<organism>
    <name type="scientific">Homo sapiens</name>
    <name type="common">Human</name>
    <dbReference type="NCBI Taxonomy" id="9606"/>
    <lineage>
        <taxon>Eukaryota</taxon>
        <taxon>Metazoa</taxon>
        <taxon>Chordata</taxon>
        <taxon>Craniata</taxon>
        <taxon>Vertebrata</taxon>
        <taxon>Euteleostomi</taxon>
        <taxon>Mammalia</taxon>
        <taxon>Eutheria</taxon>
        <taxon>Euarchontoglires</taxon>
        <taxon>Primates</taxon>
        <taxon>Haplorrhini</taxon>
        <taxon>Catarrhini</taxon>
        <taxon>Hominidae</taxon>
        <taxon>Homo</taxon>
    </lineage>
</organism>
<comment type="function">
    <text>Protease that may play a role in T-cell development.</text>
</comment>
<comment type="subcellular location">
    <subcellularLocation>
        <location>Cytoplasmic vesicle</location>
    </subcellularLocation>
    <text>Vesicular, either lysosomal or endosomal.</text>
</comment>
<comment type="tissue specificity">
    <text>Expressed predominantly in cortical thymic epithelial cells.</text>
</comment>
<comment type="developmental stage">
    <text>Expressed in fetal thymus.</text>
</comment>
<comment type="similarity">
    <text evidence="2">Belongs to the peptidase S28 family.</text>
</comment>
<protein>
    <recommendedName>
        <fullName>Thymus-specific serine protease</fullName>
        <ecNumber>3.4.-.-</ecNumber>
    </recommendedName>
    <alternativeName>
        <fullName>Serine protease 16</fullName>
    </alternativeName>
</protein>
<gene>
    <name type="primary">PRSS16</name>
    <name type="synonym">TSSP</name>
</gene>
<reference key="1">
    <citation type="journal article" date="1999" name="Cell. Immunol.">
        <title>Cloning of a novel MHC-encoded serine peptidase highly expressed by cortical epithelial cells of the thymus.</title>
        <authorList>
            <person name="Bowlus C.L."/>
            <person name="Ahn J."/>
            <person name="Chu T."/>
            <person name="Gruen J.R."/>
        </authorList>
    </citation>
    <scope>NUCLEOTIDE SEQUENCE [MRNA]</scope>
    <source>
        <tissue>Thymus</tissue>
    </source>
</reference>
<reference key="2">
    <citation type="journal article" date="2003" name="Nature">
        <title>The DNA sequence and analysis of human chromosome 6.</title>
        <authorList>
            <person name="Mungall A.J."/>
            <person name="Palmer S.A."/>
            <person name="Sims S.K."/>
            <person name="Edwards C.A."/>
            <person name="Ashurst J.L."/>
            <person name="Wilming L."/>
            <person name="Jones M.C."/>
            <person name="Horton R."/>
            <person name="Hunt S.E."/>
            <person name="Scott C.E."/>
            <person name="Gilbert J.G.R."/>
            <person name="Clamp M.E."/>
            <person name="Bethel G."/>
            <person name="Milne S."/>
            <person name="Ainscough R."/>
            <person name="Almeida J.P."/>
            <person name="Ambrose K.D."/>
            <person name="Andrews T.D."/>
            <person name="Ashwell R.I.S."/>
            <person name="Babbage A.K."/>
            <person name="Bagguley C.L."/>
            <person name="Bailey J."/>
            <person name="Banerjee R."/>
            <person name="Barker D.J."/>
            <person name="Barlow K.F."/>
            <person name="Bates K."/>
            <person name="Beare D.M."/>
            <person name="Beasley H."/>
            <person name="Beasley O."/>
            <person name="Bird C.P."/>
            <person name="Blakey S.E."/>
            <person name="Bray-Allen S."/>
            <person name="Brook J."/>
            <person name="Brown A.J."/>
            <person name="Brown J.Y."/>
            <person name="Burford D.C."/>
            <person name="Burrill W."/>
            <person name="Burton J."/>
            <person name="Carder C."/>
            <person name="Carter N.P."/>
            <person name="Chapman J.C."/>
            <person name="Clark S.Y."/>
            <person name="Clark G."/>
            <person name="Clee C.M."/>
            <person name="Clegg S."/>
            <person name="Cobley V."/>
            <person name="Collier R.E."/>
            <person name="Collins J.E."/>
            <person name="Colman L.K."/>
            <person name="Corby N.R."/>
            <person name="Coville G.J."/>
            <person name="Culley K.M."/>
            <person name="Dhami P."/>
            <person name="Davies J."/>
            <person name="Dunn M."/>
            <person name="Earthrowl M.E."/>
            <person name="Ellington A.E."/>
            <person name="Evans K.A."/>
            <person name="Faulkner L."/>
            <person name="Francis M.D."/>
            <person name="Frankish A."/>
            <person name="Frankland J."/>
            <person name="French L."/>
            <person name="Garner P."/>
            <person name="Garnett J."/>
            <person name="Ghori M.J."/>
            <person name="Gilby L.M."/>
            <person name="Gillson C.J."/>
            <person name="Glithero R.J."/>
            <person name="Grafham D.V."/>
            <person name="Grant M."/>
            <person name="Gribble S."/>
            <person name="Griffiths C."/>
            <person name="Griffiths M.N.D."/>
            <person name="Hall R."/>
            <person name="Halls K.S."/>
            <person name="Hammond S."/>
            <person name="Harley J.L."/>
            <person name="Hart E.A."/>
            <person name="Heath P.D."/>
            <person name="Heathcott R."/>
            <person name="Holmes S.J."/>
            <person name="Howden P.J."/>
            <person name="Howe K.L."/>
            <person name="Howell G.R."/>
            <person name="Huckle E."/>
            <person name="Humphray S.J."/>
            <person name="Humphries M.D."/>
            <person name="Hunt A.R."/>
            <person name="Johnson C.M."/>
            <person name="Joy A.A."/>
            <person name="Kay M."/>
            <person name="Keenan S.J."/>
            <person name="Kimberley A.M."/>
            <person name="King A."/>
            <person name="Laird G.K."/>
            <person name="Langford C."/>
            <person name="Lawlor S."/>
            <person name="Leongamornlert D.A."/>
            <person name="Leversha M."/>
            <person name="Lloyd C.R."/>
            <person name="Lloyd D.M."/>
            <person name="Loveland J.E."/>
            <person name="Lovell J."/>
            <person name="Martin S."/>
            <person name="Mashreghi-Mohammadi M."/>
            <person name="Maslen G.L."/>
            <person name="Matthews L."/>
            <person name="McCann O.T."/>
            <person name="McLaren S.J."/>
            <person name="McLay K."/>
            <person name="McMurray A."/>
            <person name="Moore M.J.F."/>
            <person name="Mullikin J.C."/>
            <person name="Niblett D."/>
            <person name="Nickerson T."/>
            <person name="Novik K.L."/>
            <person name="Oliver K."/>
            <person name="Overton-Larty E.K."/>
            <person name="Parker A."/>
            <person name="Patel R."/>
            <person name="Pearce A.V."/>
            <person name="Peck A.I."/>
            <person name="Phillimore B.J.C.T."/>
            <person name="Phillips S."/>
            <person name="Plumb R.W."/>
            <person name="Porter K.M."/>
            <person name="Ramsey Y."/>
            <person name="Ranby S.A."/>
            <person name="Rice C.M."/>
            <person name="Ross M.T."/>
            <person name="Searle S.M."/>
            <person name="Sehra H.K."/>
            <person name="Sheridan E."/>
            <person name="Skuce C.D."/>
            <person name="Smith S."/>
            <person name="Smith M."/>
            <person name="Spraggon L."/>
            <person name="Squares S.L."/>
            <person name="Steward C.A."/>
            <person name="Sycamore N."/>
            <person name="Tamlyn-Hall G."/>
            <person name="Tester J."/>
            <person name="Theaker A.J."/>
            <person name="Thomas D.W."/>
            <person name="Thorpe A."/>
            <person name="Tracey A."/>
            <person name="Tromans A."/>
            <person name="Tubby B."/>
            <person name="Wall M."/>
            <person name="Wallis J.M."/>
            <person name="West A.P."/>
            <person name="White S.S."/>
            <person name="Whitehead S.L."/>
            <person name="Whittaker H."/>
            <person name="Wild A."/>
            <person name="Willey D.J."/>
            <person name="Wilmer T.E."/>
            <person name="Wood J.M."/>
            <person name="Wray P.W."/>
            <person name="Wyatt J.C."/>
            <person name="Young L."/>
            <person name="Younger R.M."/>
            <person name="Bentley D.R."/>
            <person name="Coulson A."/>
            <person name="Durbin R.M."/>
            <person name="Hubbard T."/>
            <person name="Sulston J.E."/>
            <person name="Dunham I."/>
            <person name="Rogers J."/>
            <person name="Beck S."/>
        </authorList>
    </citation>
    <scope>NUCLEOTIDE SEQUENCE [LARGE SCALE GENOMIC DNA]</scope>
</reference>
<sequence length="514" mass="55049">MAVWLAQWLGPLLLVSLWGLLAPASLLRRLGEHIQQFQESSAQGLGLSLGPGAAALPKVGWLEQLLDPFNVSDRRSFLQRYWVNDQHWVGQDGPIFLHLGGEGSLGPGSVMRGHPAALAPAWGALVISLEHRFYGLSIPAGGLEMAQLRFLSSRLALADVVSARLALSRLFNISSSSPWICFGGSYAGSLAAWARLKFPHLIFASVASSAPVRAVLDFSEYNDVVSRSLMSTAIGGSLECRAAVSVAFAEVERRLRSGGAAQAALRTELSACGPLGRAENQAELLGALQALVGGVVQYDGQTGAPLSVRQLCGLLLGGGGNRSHSTPYCGLRRAVQIVLHSLGQKCLSFSRAETVAQLRSTEPQLSGVGDRQWLYQTCTEFGFYVTCENPRCPFSQLPALPSQLDLCEQVFGLSALSVAQAVAQTNSYYGGQTPGANKVLFVNGDTDPWHVLSVTQALGSSESTLLIRTGSHCLDMAPERPSDSPSLRLGRQNIFQQLQTWLKLAKESQIKGEV</sequence>